<feature type="chain" id="PRO_0000208847" description="Lysozyme C-1">
    <location>
        <begin position="1"/>
        <end position="129"/>
    </location>
</feature>
<feature type="domain" description="C-type lysozyme" evidence="2">
    <location>
        <begin position="1"/>
        <end position="129"/>
    </location>
</feature>
<feature type="active site" evidence="2">
    <location>
        <position position="35"/>
    </location>
</feature>
<feature type="active site" evidence="2">
    <location>
        <position position="53"/>
    </location>
</feature>
<feature type="disulfide bond" evidence="2">
    <location>
        <begin position="6"/>
        <end position="127"/>
    </location>
</feature>
<feature type="disulfide bond" evidence="2">
    <location>
        <begin position="30"/>
        <end position="115"/>
    </location>
</feature>
<feature type="disulfide bond" evidence="2">
    <location>
        <begin position="65"/>
        <end position="81"/>
    </location>
</feature>
<feature type="disulfide bond" evidence="2">
    <location>
        <begin position="77"/>
        <end position="95"/>
    </location>
</feature>
<organism>
    <name type="scientific">Capra hircus</name>
    <name type="common">Goat</name>
    <dbReference type="NCBI Taxonomy" id="9925"/>
    <lineage>
        <taxon>Eukaryota</taxon>
        <taxon>Metazoa</taxon>
        <taxon>Chordata</taxon>
        <taxon>Craniata</taxon>
        <taxon>Vertebrata</taxon>
        <taxon>Euteleostomi</taxon>
        <taxon>Mammalia</taxon>
        <taxon>Eutheria</taxon>
        <taxon>Laurasiatheria</taxon>
        <taxon>Artiodactyla</taxon>
        <taxon>Ruminantia</taxon>
        <taxon>Pecora</taxon>
        <taxon>Bovidae</taxon>
        <taxon>Caprinae</taxon>
        <taxon>Capra</taxon>
    </lineage>
</organism>
<reference key="1">
    <citation type="journal article" date="1990" name="J. Mol. Evol.">
        <title>Amino acid sequences of stomach and nonstomach lysozymes of ruminants.</title>
        <authorList>
            <person name="Jolles J."/>
            <person name="Prager E.M."/>
            <person name="Alnemri E.S."/>
            <person name="Jolles P."/>
            <person name="Ibrahimi I.M."/>
            <person name="Wilson A.C."/>
        </authorList>
    </citation>
    <scope>PROTEIN SEQUENCE</scope>
    <source>
        <tissue>Stomach</tissue>
    </source>
</reference>
<reference key="2">
    <citation type="journal article" date="1990" name="J. Mol. Evol.">
        <authorList>
            <person name="Jolles J."/>
            <person name="Prager E.M."/>
            <person name="Alnemri E.S."/>
            <person name="Jolles P."/>
            <person name="Ibrahimi I.M."/>
            <person name="Wilson A.C."/>
        </authorList>
    </citation>
    <scope>ERRATUM OF PUBMED:2111849</scope>
</reference>
<keyword id="KW-0929">Antimicrobial</keyword>
<keyword id="KW-0081">Bacteriolytic enzyme</keyword>
<keyword id="KW-0222">Digestion</keyword>
<keyword id="KW-0903">Direct protein sequencing</keyword>
<keyword id="KW-1015">Disulfide bond</keyword>
<keyword id="KW-0326">Glycosidase</keyword>
<keyword id="KW-0378">Hydrolase</keyword>
<keyword id="KW-1185">Reference proteome</keyword>
<dbReference type="EC" id="3.2.1.17"/>
<dbReference type="SMR" id="P37713"/>
<dbReference type="STRING" id="9925.ENSCHIP00000002359"/>
<dbReference type="CAZy" id="GH22">
    <property type="family name" value="Glycoside Hydrolase Family 22"/>
</dbReference>
<dbReference type="Proteomes" id="UP000291000">
    <property type="component" value="Unassembled WGS sequence"/>
</dbReference>
<dbReference type="Proteomes" id="UP000694566">
    <property type="component" value="Unplaced"/>
</dbReference>
<dbReference type="GO" id="GO:0003796">
    <property type="term" value="F:lysozyme activity"/>
    <property type="evidence" value="ECO:0007669"/>
    <property type="project" value="UniProtKB-EC"/>
</dbReference>
<dbReference type="GO" id="GO:0050829">
    <property type="term" value="P:defense response to Gram-negative bacterium"/>
    <property type="evidence" value="ECO:0007669"/>
    <property type="project" value="TreeGrafter"/>
</dbReference>
<dbReference type="GO" id="GO:0050830">
    <property type="term" value="P:defense response to Gram-positive bacterium"/>
    <property type="evidence" value="ECO:0007669"/>
    <property type="project" value="TreeGrafter"/>
</dbReference>
<dbReference type="GO" id="GO:0007586">
    <property type="term" value="P:digestion"/>
    <property type="evidence" value="ECO:0007669"/>
    <property type="project" value="UniProtKB-KW"/>
</dbReference>
<dbReference type="GO" id="GO:0031640">
    <property type="term" value="P:killing of cells of another organism"/>
    <property type="evidence" value="ECO:0007669"/>
    <property type="project" value="UniProtKB-KW"/>
</dbReference>
<dbReference type="CDD" id="cd16897">
    <property type="entry name" value="LYZ_C"/>
    <property type="match status" value="1"/>
</dbReference>
<dbReference type="FunFam" id="1.10.530.10:FF:000001">
    <property type="entry name" value="Lysozyme C"/>
    <property type="match status" value="1"/>
</dbReference>
<dbReference type="Gene3D" id="1.10.530.10">
    <property type="match status" value="1"/>
</dbReference>
<dbReference type="InterPro" id="IPR001916">
    <property type="entry name" value="Glyco_hydro_22"/>
</dbReference>
<dbReference type="InterPro" id="IPR019799">
    <property type="entry name" value="Glyco_hydro_22_CS"/>
</dbReference>
<dbReference type="InterPro" id="IPR000974">
    <property type="entry name" value="Glyco_hydro_22_lys"/>
</dbReference>
<dbReference type="InterPro" id="IPR023346">
    <property type="entry name" value="Lysozyme-like_dom_sf"/>
</dbReference>
<dbReference type="PANTHER" id="PTHR11407">
    <property type="entry name" value="LYSOZYME C"/>
    <property type="match status" value="1"/>
</dbReference>
<dbReference type="PANTHER" id="PTHR11407:SF28">
    <property type="entry name" value="LYSOZYME C"/>
    <property type="match status" value="1"/>
</dbReference>
<dbReference type="Pfam" id="PF00062">
    <property type="entry name" value="Lys"/>
    <property type="match status" value="1"/>
</dbReference>
<dbReference type="PRINTS" id="PR00137">
    <property type="entry name" value="LYSOZYME"/>
</dbReference>
<dbReference type="PRINTS" id="PR00135">
    <property type="entry name" value="LYZLACT"/>
</dbReference>
<dbReference type="SMART" id="SM00263">
    <property type="entry name" value="LYZ1"/>
    <property type="match status" value="1"/>
</dbReference>
<dbReference type="SUPFAM" id="SSF53955">
    <property type="entry name" value="Lysozyme-like"/>
    <property type="match status" value="1"/>
</dbReference>
<dbReference type="PROSITE" id="PS00128">
    <property type="entry name" value="GLYCOSYL_HYDROL_F22_1"/>
    <property type="match status" value="1"/>
</dbReference>
<dbReference type="PROSITE" id="PS51348">
    <property type="entry name" value="GLYCOSYL_HYDROL_F22_2"/>
    <property type="match status" value="1"/>
</dbReference>
<sequence length="129" mass="14433">KVFERCELARTLKKLGLDDYKGVSLANWLCLTKWESGYNTKATNYNPGSESTDYGIFQINSKFWCNDGKTPDAVDGCHVSCSELMENDIEKAVACAKHIVSEQGITAWVAWKSHCRDHDVSSYVEGCTL</sequence>
<accession>P37713</accession>
<name>LYSC1_CAPHI</name>
<comment type="function">
    <text>Lysozymes have primarily a bacteriolytic function; those in tissues and body fluids are associated with the monocyte-macrophage system and enhance the activity of immunoagents.</text>
</comment>
<comment type="catalytic activity">
    <reaction>
        <text>Hydrolysis of (1-&gt;4)-beta-linkages between N-acetylmuramic acid and N-acetyl-D-glucosamine residues in a peptidoglycan and between N-acetyl-D-glucosamine residues in chitodextrins.</text>
        <dbReference type="EC" id="3.2.1.17"/>
    </reaction>
</comment>
<comment type="subunit">
    <text evidence="1">Monomer.</text>
</comment>
<comment type="miscellaneous">
    <text>Lysozyme C is capable of both hydrolysis and transglycosylation; it also shows a slight esterase activity. It acts rapidly on both peptide-substituted and unsubstituted peptidoglycan, and slowly on chitin oligosaccharides.</text>
</comment>
<comment type="similarity">
    <text evidence="2">Belongs to the glycosyl hydrolase 22 family.</text>
</comment>
<proteinExistence type="evidence at protein level"/>
<evidence type="ECO:0000250" key="1"/>
<evidence type="ECO:0000255" key="2">
    <source>
        <dbReference type="PROSITE-ProRule" id="PRU00680"/>
    </source>
</evidence>
<protein>
    <recommendedName>
        <fullName>Lysozyme C-1</fullName>
        <ecNumber>3.2.1.17</ecNumber>
    </recommendedName>
    <alternativeName>
        <fullName>1,4-beta-N-acetylmuramidase C-1</fullName>
    </alternativeName>
</protein>